<gene>
    <name type="primary">ATXN10</name>
    <name type="synonym">SCA10</name>
</gene>
<name>ATX10_HUMAN</name>
<sequence>MAAPRPPPARLSGVMVPAPIQDLEALRALTALFKEQRNRETAPRTIFQRVLDILKKSSHAVELACRDPSQVENLASSLQLITECFRCLRNACIECSVNQNSIRNLDTIGVAVDLILLFRELRVEQESLLTAFRCGLQFLGNIASRNEDSQSIVWVHAFPELFLSCLNHPDKKIVAYSSMILFTSLNHERMKELEENLNIAIDVIDAYQKHPESEWPFLIITDLFLKSPELVQAMFPKLNNQERVTLLDLMIAKITSDEPLTKDDIPVFLRHAELIASTFVDQCKTVLKLASEEPPDDEEALATIRLLDVLCEMTVNTELLGYLQVFPGLLERVIDLLRVIHVAGKETTNIFSNCGCVRAEGDISNVANGFKSHLIRLIGNLCYKNKDNQDKVNELDGIPLILDNCNISDSNPFLTQWVIYAIRNLTEDNSQNQDLIAKMEEQGLADASLLKKVGFEVEKKGEKLILKSTRDTPKP</sequence>
<protein>
    <recommendedName>
        <fullName>Ataxin-10</fullName>
    </recommendedName>
    <alternativeName>
        <fullName>Brain protein E46 homolog</fullName>
    </alternativeName>
    <alternativeName>
        <fullName>Spinocerebellar ataxia type 10 protein</fullName>
    </alternativeName>
</protein>
<dbReference type="EMBL" id="AL050282">
    <property type="protein sequence ID" value="CAB43383.1"/>
    <property type="molecule type" value="mRNA"/>
</dbReference>
<dbReference type="EMBL" id="AF119662">
    <property type="protein sequence ID" value="AAF17219.1"/>
    <property type="molecule type" value="mRNA"/>
</dbReference>
<dbReference type="EMBL" id="CR457381">
    <property type="protein sequence ID" value="CAG33662.1"/>
    <property type="molecule type" value="mRNA"/>
</dbReference>
<dbReference type="EMBL" id="CR456568">
    <property type="protein sequence ID" value="CAG30454.1"/>
    <property type="molecule type" value="mRNA"/>
</dbReference>
<dbReference type="EMBL" id="AK294348">
    <property type="protein sequence ID" value="BAG57616.1"/>
    <property type="molecule type" value="mRNA"/>
</dbReference>
<dbReference type="EMBL" id="Z84478">
    <property type="status" value="NOT_ANNOTATED_CDS"/>
    <property type="molecule type" value="Genomic_DNA"/>
</dbReference>
<dbReference type="EMBL" id="Z93784">
    <property type="status" value="NOT_ANNOTATED_CDS"/>
    <property type="molecule type" value="Genomic_DNA"/>
</dbReference>
<dbReference type="EMBL" id="Z95331">
    <property type="status" value="NOT_ANNOTATED_CDS"/>
    <property type="molecule type" value="Genomic_DNA"/>
</dbReference>
<dbReference type="EMBL" id="BC007508">
    <property type="protein sequence ID" value="AAH07508.1"/>
    <property type="molecule type" value="mRNA"/>
</dbReference>
<dbReference type="CCDS" id="CCDS14070.1">
    <molecule id="Q9UBB4-1"/>
</dbReference>
<dbReference type="CCDS" id="CCDS54540.1">
    <molecule id="Q9UBB4-2"/>
</dbReference>
<dbReference type="PIR" id="T08753">
    <property type="entry name" value="T08753"/>
</dbReference>
<dbReference type="RefSeq" id="NP_001161093.1">
    <molecule id="Q9UBB4-2"/>
    <property type="nucleotide sequence ID" value="NM_001167621.2"/>
</dbReference>
<dbReference type="RefSeq" id="NP_037368.1">
    <molecule id="Q9UBB4-1"/>
    <property type="nucleotide sequence ID" value="NM_013236.4"/>
</dbReference>
<dbReference type="SMR" id="Q9UBB4"/>
<dbReference type="BioGRID" id="117343">
    <property type="interactions" value="193"/>
</dbReference>
<dbReference type="FunCoup" id="Q9UBB4">
    <property type="interactions" value="1853"/>
</dbReference>
<dbReference type="IntAct" id="Q9UBB4">
    <property type="interactions" value="120"/>
</dbReference>
<dbReference type="MINT" id="Q9UBB4"/>
<dbReference type="STRING" id="9606.ENSP00000252934"/>
<dbReference type="CarbonylDB" id="Q9UBB4"/>
<dbReference type="GlyGen" id="Q9UBB4">
    <property type="glycosylation" value="1 site, 1 O-linked glycan (1 site)"/>
</dbReference>
<dbReference type="iPTMnet" id="Q9UBB4"/>
<dbReference type="MetOSite" id="Q9UBB4"/>
<dbReference type="PhosphoSitePlus" id="Q9UBB4"/>
<dbReference type="SwissPalm" id="Q9UBB4"/>
<dbReference type="BioMuta" id="ATXN10"/>
<dbReference type="DMDM" id="17372671"/>
<dbReference type="jPOST" id="Q9UBB4"/>
<dbReference type="MassIVE" id="Q9UBB4"/>
<dbReference type="PaxDb" id="9606-ENSP00000252934"/>
<dbReference type="PeptideAtlas" id="Q9UBB4"/>
<dbReference type="ProteomicsDB" id="83921">
    <molecule id="Q9UBB4-1"/>
</dbReference>
<dbReference type="ProteomicsDB" id="83922">
    <molecule id="Q9UBB4-2"/>
</dbReference>
<dbReference type="Pumba" id="Q9UBB4"/>
<dbReference type="Antibodypedia" id="27938">
    <property type="antibodies" value="196 antibodies from 26 providers"/>
</dbReference>
<dbReference type="DNASU" id="25814"/>
<dbReference type="Ensembl" id="ENST00000252934.10">
    <molecule id="Q9UBB4-1"/>
    <property type="protein sequence ID" value="ENSP00000252934.4"/>
    <property type="gene ID" value="ENSG00000130638.18"/>
</dbReference>
<dbReference type="Ensembl" id="ENST00000381061.8">
    <molecule id="Q9UBB4-2"/>
    <property type="protein sequence ID" value="ENSP00000370449.4"/>
    <property type="gene ID" value="ENSG00000130638.18"/>
</dbReference>
<dbReference type="GeneID" id="25814"/>
<dbReference type="KEGG" id="hsa:25814"/>
<dbReference type="MANE-Select" id="ENST00000252934.10">
    <property type="protein sequence ID" value="ENSP00000252934.4"/>
    <property type="RefSeq nucleotide sequence ID" value="NM_013236.4"/>
    <property type="RefSeq protein sequence ID" value="NP_037368.1"/>
</dbReference>
<dbReference type="UCSC" id="uc003bgm.3">
    <molecule id="Q9UBB4-1"/>
    <property type="organism name" value="human"/>
</dbReference>
<dbReference type="AGR" id="HGNC:10549"/>
<dbReference type="CTD" id="25814"/>
<dbReference type="DisGeNET" id="25814"/>
<dbReference type="GeneCards" id="ATXN10"/>
<dbReference type="GeneReviews" id="ATXN10"/>
<dbReference type="HGNC" id="HGNC:10549">
    <property type="gene designation" value="ATXN10"/>
</dbReference>
<dbReference type="HPA" id="ENSG00000130638">
    <property type="expression patterns" value="Low tissue specificity"/>
</dbReference>
<dbReference type="MalaCards" id="ATXN10"/>
<dbReference type="MIM" id="603516">
    <property type="type" value="phenotype"/>
</dbReference>
<dbReference type="MIM" id="611150">
    <property type="type" value="gene"/>
</dbReference>
<dbReference type="neXtProt" id="NX_Q9UBB4"/>
<dbReference type="OpenTargets" id="ENSG00000130638"/>
<dbReference type="Orphanet" id="98761">
    <property type="disease" value="Spinocerebellar ataxia type 10"/>
</dbReference>
<dbReference type="PharmGKB" id="PA34959"/>
<dbReference type="VEuPathDB" id="HostDB:ENSG00000130638"/>
<dbReference type="eggNOG" id="KOG2676">
    <property type="taxonomic scope" value="Eukaryota"/>
</dbReference>
<dbReference type="GeneTree" id="ENSGT00390000010377"/>
<dbReference type="HOGENOM" id="CLU_046084_1_0_1"/>
<dbReference type="InParanoid" id="Q9UBB4"/>
<dbReference type="OMA" id="CAWESPP"/>
<dbReference type="OrthoDB" id="379794at2759"/>
<dbReference type="PAN-GO" id="Q9UBB4">
    <property type="GO annotations" value="2 GO annotations based on evolutionary models"/>
</dbReference>
<dbReference type="PhylomeDB" id="Q9UBB4"/>
<dbReference type="TreeFam" id="TF323870"/>
<dbReference type="PathwayCommons" id="Q9UBB4"/>
<dbReference type="SignaLink" id="Q9UBB4"/>
<dbReference type="SIGNOR" id="Q9UBB4"/>
<dbReference type="BioGRID-ORCS" id="25814">
    <property type="hits" value="382 hits in 1173 CRISPR screens"/>
</dbReference>
<dbReference type="CD-CODE" id="232F8A39">
    <property type="entry name" value="P-body"/>
</dbReference>
<dbReference type="CD-CODE" id="FB4E32DD">
    <property type="entry name" value="Presynaptic clusters and postsynaptic densities"/>
</dbReference>
<dbReference type="ChiTaRS" id="ATXN10">
    <property type="organism name" value="human"/>
</dbReference>
<dbReference type="GeneWiki" id="ATXN10"/>
<dbReference type="GenomeRNAi" id="25814"/>
<dbReference type="Pharos" id="Q9UBB4">
    <property type="development level" value="Tbio"/>
</dbReference>
<dbReference type="PRO" id="PR:Q9UBB4"/>
<dbReference type="Proteomes" id="UP000005640">
    <property type="component" value="Chromosome 22"/>
</dbReference>
<dbReference type="RNAct" id="Q9UBB4">
    <property type="molecule type" value="protein"/>
</dbReference>
<dbReference type="Bgee" id="ENSG00000130638">
    <property type="expression patterns" value="Expressed in cortical plate and 214 other cell types or tissues"/>
</dbReference>
<dbReference type="ExpressionAtlas" id="Q9UBB4">
    <property type="expression patterns" value="baseline and differential"/>
</dbReference>
<dbReference type="GO" id="GO:0005814">
    <property type="term" value="C:centriole"/>
    <property type="evidence" value="ECO:0000250"/>
    <property type="project" value="UniProtKB"/>
</dbReference>
<dbReference type="GO" id="GO:0036064">
    <property type="term" value="C:ciliary basal body"/>
    <property type="evidence" value="ECO:0000250"/>
    <property type="project" value="UniProtKB"/>
</dbReference>
<dbReference type="GO" id="GO:0005929">
    <property type="term" value="C:cilium"/>
    <property type="evidence" value="ECO:0000314"/>
    <property type="project" value="HPA"/>
</dbReference>
<dbReference type="GO" id="GO:0005737">
    <property type="term" value="C:cytoplasm"/>
    <property type="evidence" value="ECO:0000314"/>
    <property type="project" value="UniProtKB"/>
</dbReference>
<dbReference type="GO" id="GO:0005829">
    <property type="term" value="C:cytosol"/>
    <property type="evidence" value="ECO:0000314"/>
    <property type="project" value="HPA"/>
</dbReference>
<dbReference type="GO" id="GO:0030425">
    <property type="term" value="C:dendrite"/>
    <property type="evidence" value="ECO:0000314"/>
    <property type="project" value="UniProtKB"/>
</dbReference>
<dbReference type="GO" id="GO:0005615">
    <property type="term" value="C:extracellular space"/>
    <property type="evidence" value="ECO:0007005"/>
    <property type="project" value="UniProtKB"/>
</dbReference>
<dbReference type="GO" id="GO:0016020">
    <property type="term" value="C:membrane"/>
    <property type="evidence" value="ECO:0007005"/>
    <property type="project" value="UniProtKB"/>
</dbReference>
<dbReference type="GO" id="GO:0030496">
    <property type="term" value="C:midbody"/>
    <property type="evidence" value="ECO:0000314"/>
    <property type="project" value="UniProtKB"/>
</dbReference>
<dbReference type="GO" id="GO:0043025">
    <property type="term" value="C:neuronal cell body"/>
    <property type="evidence" value="ECO:0000314"/>
    <property type="project" value="UniProtKB"/>
</dbReference>
<dbReference type="GO" id="GO:0048471">
    <property type="term" value="C:perinuclear region of cytoplasm"/>
    <property type="evidence" value="ECO:0000314"/>
    <property type="project" value="UniProtKB"/>
</dbReference>
<dbReference type="GO" id="GO:0005886">
    <property type="term" value="C:plasma membrane"/>
    <property type="evidence" value="ECO:0000314"/>
    <property type="project" value="HPA"/>
</dbReference>
<dbReference type="GO" id="GO:0051301">
    <property type="term" value="P:cell division"/>
    <property type="evidence" value="ECO:0007669"/>
    <property type="project" value="UniProtKB-KW"/>
</dbReference>
<dbReference type="GO" id="GO:0060271">
    <property type="term" value="P:cilium assembly"/>
    <property type="evidence" value="ECO:0007669"/>
    <property type="project" value="Ensembl"/>
</dbReference>
<dbReference type="GO" id="GO:0007399">
    <property type="term" value="P:nervous system development"/>
    <property type="evidence" value="ECO:0000315"/>
    <property type="project" value="UniProtKB"/>
</dbReference>
<dbReference type="GO" id="GO:0031175">
    <property type="term" value="P:neuron projection development"/>
    <property type="evidence" value="ECO:0000314"/>
    <property type="project" value="UniProtKB"/>
</dbReference>
<dbReference type="GO" id="GO:0032465">
    <property type="term" value="P:regulation of cytokinesis"/>
    <property type="evidence" value="ECO:0000315"/>
    <property type="project" value="UniProtKB"/>
</dbReference>
<dbReference type="FunFam" id="1.25.10.10:FF:000390">
    <property type="entry name" value="Ataxin-10"/>
    <property type="match status" value="1"/>
</dbReference>
<dbReference type="FunFam" id="1.25.10.10:FF:000427">
    <property type="entry name" value="Ataxin-10 isoform 1"/>
    <property type="match status" value="1"/>
</dbReference>
<dbReference type="Gene3D" id="1.25.10.10">
    <property type="entry name" value="Leucine-rich Repeat Variant"/>
    <property type="match status" value="2"/>
</dbReference>
<dbReference type="InterPro" id="IPR011989">
    <property type="entry name" value="ARM-like"/>
</dbReference>
<dbReference type="InterPro" id="IPR016024">
    <property type="entry name" value="ARM-type_fold"/>
</dbReference>
<dbReference type="InterPro" id="IPR051374">
    <property type="entry name" value="Ataxin-10/CTR86_families"/>
</dbReference>
<dbReference type="InterPro" id="IPR019156">
    <property type="entry name" value="Ataxin-10_domain"/>
</dbReference>
<dbReference type="PANTHER" id="PTHR13255">
    <property type="entry name" value="ATAXIN-10"/>
    <property type="match status" value="1"/>
</dbReference>
<dbReference type="PANTHER" id="PTHR13255:SF0">
    <property type="entry name" value="ATAXIN-10"/>
    <property type="match status" value="1"/>
</dbReference>
<dbReference type="Pfam" id="PF09759">
    <property type="entry name" value="Atx10homo_assoc"/>
    <property type="match status" value="1"/>
</dbReference>
<dbReference type="SUPFAM" id="SSF48371">
    <property type="entry name" value="ARM repeat"/>
    <property type="match status" value="1"/>
</dbReference>
<keyword id="KW-0025">Alternative splicing</keyword>
<keyword id="KW-0131">Cell cycle</keyword>
<keyword id="KW-0132">Cell division</keyword>
<keyword id="KW-0966">Cell projection</keyword>
<keyword id="KW-1186">Ciliopathy</keyword>
<keyword id="KW-0963">Cytoplasm</keyword>
<keyword id="KW-0206">Cytoskeleton</keyword>
<keyword id="KW-0488">Methylation</keyword>
<keyword id="KW-0523">Neurodegeneration</keyword>
<keyword id="KW-0597">Phosphoprotein</keyword>
<keyword id="KW-1267">Proteomics identification</keyword>
<keyword id="KW-1185">Reference proteome</keyword>
<keyword id="KW-0950">Spinocerebellar ataxia</keyword>
<keyword id="KW-0832">Ubl conjugation</keyword>
<organism>
    <name type="scientific">Homo sapiens</name>
    <name type="common">Human</name>
    <dbReference type="NCBI Taxonomy" id="9606"/>
    <lineage>
        <taxon>Eukaryota</taxon>
        <taxon>Metazoa</taxon>
        <taxon>Chordata</taxon>
        <taxon>Craniata</taxon>
        <taxon>Vertebrata</taxon>
        <taxon>Euteleostomi</taxon>
        <taxon>Mammalia</taxon>
        <taxon>Eutheria</taxon>
        <taxon>Euarchontoglires</taxon>
        <taxon>Primates</taxon>
        <taxon>Haplorrhini</taxon>
        <taxon>Catarrhini</taxon>
        <taxon>Hominidae</taxon>
        <taxon>Homo</taxon>
    </lineage>
</organism>
<proteinExistence type="evidence at protein level"/>
<comment type="function">
    <text evidence="1 2 7 8">May play a role in the regulation of cytokinesis (PubMed:21857149, PubMed:25666058). May play a role in signaling by stimulating protein glycosylation. Induces neuritogenesis by activating the Ras-MAP kinase pathway and is necessary for the survival of cerebellar neurons (By similarity). Does not appear to play a major role in ciliogenesis (By similarity).</text>
</comment>
<comment type="subunit">
    <text evidence="2 5 6">Homooligomer (By similarity). Interacts with GNB2 (PubMed:16498633). Interacts with IQCB1 (PubMed:21565611). Interacts with OGT (By similarity).</text>
</comment>
<comment type="interaction">
    <interactant intactId="EBI-702390">
        <id>Q9UBB4</id>
    </interactant>
    <interactant intactId="EBI-11529439">
        <id>P63010-2</id>
        <label>AP2B1</label>
    </interactant>
    <organismsDiffer>false</organismsDiffer>
    <experiments>3</experiments>
</comment>
<comment type="interaction">
    <interactant intactId="EBI-702390">
        <id>Q9UBB4</id>
    </interactant>
    <interactant intactId="EBI-10989614">
        <id>Q9BZZ5-2</id>
        <label>API5</label>
    </interactant>
    <organismsDiffer>false</organismsDiffer>
    <experiments>3</experiments>
</comment>
<comment type="interaction">
    <interactant intactId="EBI-702390">
        <id>Q9UBB4</id>
    </interactant>
    <interactant intactId="EBI-519866">
        <id>Q16611</id>
        <label>BAK1</label>
    </interactant>
    <organismsDiffer>false</organismsDiffer>
    <experiments>3</experiments>
</comment>
<comment type="interaction">
    <interactant intactId="EBI-702390">
        <id>Q9UBB4</id>
    </interactant>
    <interactant intactId="EBI-2836704">
        <id>P29017</id>
        <label>CD1C</label>
    </interactant>
    <organismsDiffer>false</organismsDiffer>
    <experiments>3</experiments>
</comment>
<comment type="interaction">
    <interactant intactId="EBI-702390">
        <id>Q9UBB4</id>
    </interactant>
    <interactant intactId="EBI-396137">
        <id>Q9UJX2</id>
        <label>CDC23</label>
    </interactant>
    <organismsDiffer>false</organismsDiffer>
    <experiments>3</experiments>
</comment>
<comment type="interaction">
    <interactant intactId="EBI-702390">
        <id>Q9UBB4</id>
    </interactant>
    <interactant intactId="EBI-1210604">
        <id>Q7Z7K6</id>
        <label>CENPV</label>
    </interactant>
    <organismsDiffer>false</organismsDiffer>
    <experiments>3</experiments>
</comment>
<comment type="interaction">
    <interactant intactId="EBI-702390">
        <id>Q9UBB4</id>
    </interactant>
    <interactant intactId="EBI-350590">
        <id>Q9UNS2</id>
        <label>COPS3</label>
    </interactant>
    <organismsDiffer>false</organismsDiffer>
    <experiments>3</experiments>
</comment>
<comment type="interaction">
    <interactant intactId="EBI-702390">
        <id>Q9UBB4</id>
    </interactant>
    <interactant intactId="EBI-5453285">
        <id>Q2TBE0</id>
        <label>CWF19L2</label>
    </interactant>
    <organismsDiffer>false</organismsDiffer>
    <experiments>3</experiments>
</comment>
<comment type="interaction">
    <interactant intactId="EBI-702390">
        <id>Q9UBB4</id>
    </interactant>
    <interactant intactId="EBI-25858204">
        <id>Q14689-3</id>
        <label>DIP2A</label>
    </interactant>
    <organismsDiffer>false</organismsDiffer>
    <experiments>3</experiments>
</comment>
<comment type="interaction">
    <interactant intactId="EBI-702390">
        <id>Q9UBB4</id>
    </interactant>
    <interactant intactId="EBI-750650">
        <id>Q71DI3</id>
        <label>H3C15</label>
    </interactant>
    <organismsDiffer>false</organismsDiffer>
    <experiments>3</experiments>
</comment>
<comment type="interaction">
    <interactant intactId="EBI-702390">
        <id>Q9UBB4</id>
    </interactant>
    <interactant intactId="EBI-304185">
        <id>P61978</id>
        <label>HNRNPK</label>
    </interactant>
    <organismsDiffer>false</organismsDiffer>
    <experiments>3</experiments>
</comment>
<comment type="interaction">
    <interactant intactId="EBI-702390">
        <id>Q9UBB4</id>
    </interactant>
    <interactant intactId="EBI-2806068">
        <id>Q12891</id>
        <label>HYAL2</label>
    </interactant>
    <organismsDiffer>false</organismsDiffer>
    <experiments>3</experiments>
</comment>
<comment type="interaction">
    <interactant intactId="EBI-702390">
        <id>Q9UBB4</id>
    </interactant>
    <interactant intactId="EBI-5278370">
        <id>Q14693</id>
        <label>LPIN1</label>
    </interactant>
    <organismsDiffer>false</organismsDiffer>
    <experiments>3</experiments>
</comment>
<comment type="interaction">
    <interactant intactId="EBI-702390">
        <id>Q9UBB4</id>
    </interactant>
    <interactant intactId="EBI-11477916">
        <id>Q96KN4</id>
        <label>LRATD1</label>
    </interactant>
    <organismsDiffer>false</organismsDiffer>
    <experiments>3</experiments>
</comment>
<comment type="interaction">
    <interactant intactId="EBI-702390">
        <id>Q9UBB4</id>
    </interactant>
    <interactant intactId="EBI-2804835">
        <id>O94851</id>
        <label>MICAL2</label>
    </interactant>
    <organismsDiffer>false</organismsDiffer>
    <experiments>3</experiments>
</comment>
<comment type="interaction">
    <interactant intactId="EBI-702390">
        <id>Q9UBB4</id>
    </interactant>
    <interactant intactId="EBI-8475277">
        <id>Q15049</id>
        <label>MLC1</label>
    </interactant>
    <organismsDiffer>false</organismsDiffer>
    <experiments>3</experiments>
</comment>
<comment type="interaction">
    <interactant intactId="EBI-702390">
        <id>Q9UBB4</id>
    </interactant>
    <interactant intactId="EBI-740216">
        <id>P55198</id>
        <label>MLLT6</label>
    </interactant>
    <organismsDiffer>false</organismsDiffer>
    <experiments>3</experiments>
</comment>
<comment type="interaction">
    <interactant intactId="EBI-702390">
        <id>Q9UBB4</id>
    </interactant>
    <interactant intactId="EBI-447544">
        <id>P01106</id>
        <label>MYC</label>
    </interactant>
    <organismsDiffer>false</organismsDiffer>
    <experiments>4</experiments>
</comment>
<comment type="interaction">
    <interactant intactId="EBI-702390">
        <id>Q9UBB4</id>
    </interactant>
    <interactant intactId="EBI-12054609">
        <id>Q13772-3</id>
        <label>NCOA4</label>
    </interactant>
    <organismsDiffer>false</organismsDiffer>
    <experiments>3</experiments>
</comment>
<comment type="interaction">
    <interactant intactId="EBI-702390">
        <id>Q9UBB4</id>
    </interactant>
    <interactant intactId="EBI-2339674">
        <id>Q5T6S3</id>
        <label>PHF19</label>
    </interactant>
    <organismsDiffer>false</organismsDiffer>
    <experiments>3</experiments>
</comment>
<comment type="interaction">
    <interactant intactId="EBI-702390">
        <id>Q9UBB4</id>
    </interactant>
    <interactant intactId="EBI-629434">
        <id>O75925</id>
        <label>PIAS1</label>
    </interactant>
    <organismsDiffer>false</organismsDiffer>
    <experiments>3</experiments>
</comment>
<comment type="interaction">
    <interactant intactId="EBI-702390">
        <id>Q9UBB4</id>
    </interactant>
    <interactant intactId="EBI-351726">
        <id>O14974</id>
        <label>PPP1R12A</label>
    </interactant>
    <organismsDiffer>false</organismsDiffer>
    <experiments>4</experiments>
</comment>
<comment type="interaction">
    <interactant intactId="EBI-702390">
        <id>Q9UBB4</id>
    </interactant>
    <interactant intactId="EBI-11528848">
        <id>Q8N6K7-2</id>
        <label>SAMD3</label>
    </interactant>
    <organismsDiffer>false</organismsDiffer>
    <experiments>3</experiments>
</comment>
<comment type="interaction">
    <interactant intactId="EBI-702390">
        <id>Q9UBB4</id>
    </interactant>
    <interactant intactId="EBI-358545">
        <id>Q9GZS3</id>
        <label>SKIC8</label>
    </interactant>
    <organismsDiffer>false</organismsDiffer>
    <experiments>3</experiments>
</comment>
<comment type="interaction">
    <interactant intactId="EBI-702390">
        <id>Q9UBB4</id>
    </interactant>
    <interactant intactId="EBI-750559">
        <id>O95391</id>
        <label>SLU7</label>
    </interactant>
    <organismsDiffer>false</organismsDiffer>
    <experiments>3</experiments>
</comment>
<comment type="interaction">
    <interactant intactId="EBI-702390">
        <id>Q9UBB4</id>
    </interactant>
    <interactant intactId="EBI-7067260">
        <id>Q8NHS9</id>
        <label>SPATA22</label>
    </interactant>
    <organismsDiffer>false</organismsDiffer>
    <experiments>3</experiments>
</comment>
<comment type="interaction">
    <interactant intactId="EBI-702390">
        <id>Q9UBB4</id>
    </interactant>
    <interactant intactId="EBI-2510414">
        <id>Q8IUW3</id>
        <label>SPATA2L</label>
    </interactant>
    <organismsDiffer>false</organismsDiffer>
    <experiments>3</experiments>
</comment>
<comment type="interaction">
    <interactant intactId="EBI-702390">
        <id>Q9UBB4</id>
    </interactant>
    <interactant intactId="EBI-25831443">
        <id>Q9BR01-2</id>
        <label>SULT4A1</label>
    </interactant>
    <organismsDiffer>false</organismsDiffer>
    <experiments>3</experiments>
</comment>
<comment type="interaction">
    <interactant intactId="EBI-702390">
        <id>Q9UBB4</id>
    </interactant>
    <interactant intactId="EBI-711424">
        <id>Q04724</id>
        <label>TLE1</label>
    </interactant>
    <organismsDiffer>false</organismsDiffer>
    <experiments>3</experiments>
</comment>
<comment type="interaction">
    <interactant intactId="EBI-702390">
        <id>Q9UBB4</id>
    </interactant>
    <interactant intactId="EBI-1797313">
        <id>Q8WVJ9</id>
        <label>TWIST2</label>
    </interactant>
    <organismsDiffer>false</organismsDiffer>
    <experiments>3</experiments>
</comment>
<comment type="interaction">
    <interactant intactId="EBI-702390">
        <id>Q9UBB4</id>
    </interactant>
    <interactant intactId="EBI-947187">
        <id>Q9UHD9</id>
        <label>UBQLN2</label>
    </interactant>
    <organismsDiffer>false</organismsDiffer>
    <experiments>3</experiments>
</comment>
<comment type="interaction">
    <interactant intactId="EBI-702390">
        <id>Q9UBB4</id>
    </interactant>
    <interactant intactId="EBI-25832660">
        <id>Q9H347</id>
        <label>UBQLN3</label>
    </interactant>
    <organismsDiffer>false</organismsDiffer>
    <experiments>3</experiments>
</comment>
<comment type="interaction">
    <interactant intactId="EBI-702390">
        <id>Q9UBB4</id>
    </interactant>
    <interactant intactId="EBI-12295223">
        <id>Q8IYU4</id>
        <label>UBQLNL</label>
    </interactant>
    <organismsDiffer>false</organismsDiffer>
    <experiments>3</experiments>
</comment>
<comment type="interaction">
    <interactant intactId="EBI-702390">
        <id>Q9UBB4</id>
    </interactant>
    <interactant intactId="EBI-473284">
        <id>Q9BVJ6</id>
        <label>UTP14A</label>
    </interactant>
    <organismsDiffer>false</organismsDiffer>
    <experiments>3</experiments>
</comment>
<comment type="interaction">
    <interactant intactId="EBI-702390">
        <id>Q9UBB4</id>
    </interactant>
    <interactant intactId="EBI-353844">
        <id>P08670</id>
        <label>VIM</label>
    </interactant>
    <organismsDiffer>false</organismsDiffer>
    <experiments>3</experiments>
</comment>
<comment type="interaction">
    <interactant intactId="EBI-702390">
        <id>Q9UBB4</id>
    </interactant>
    <interactant intactId="EBI-2876965">
        <id>Q9Y2L8</id>
        <label>ZKSCAN5</label>
    </interactant>
    <organismsDiffer>false</organismsDiffer>
    <experiments>3</experiments>
</comment>
<comment type="interaction">
    <interactant intactId="EBI-702390">
        <id>Q9UBB4</id>
    </interactant>
    <interactant intactId="EBI-749023">
        <id>Q9UNY5</id>
        <label>ZNF232</label>
    </interactant>
    <organismsDiffer>false</organismsDiffer>
    <experiments>3</experiments>
</comment>
<comment type="interaction">
    <interactant intactId="EBI-702390">
        <id>Q9UBB4</id>
    </interactant>
    <interactant intactId="EBI-10251462">
        <id>Q6NX45</id>
        <label>ZNF774</label>
    </interactant>
    <organismsDiffer>false</organismsDiffer>
    <experiments>3</experiments>
</comment>
<comment type="interaction">
    <interactant intactId="EBI-702390">
        <id>Q9UBB4</id>
    </interactant>
    <interactant intactId="EBI-10976904">
        <id>Q96E88</id>
    </interactant>
    <organismsDiffer>false</organismsDiffer>
    <experiments>3</experiments>
</comment>
<comment type="subcellular location">
    <subcellularLocation>
        <location evidence="5 8">Cytoplasm</location>
        <location evidence="5 8">Perinuclear region</location>
    </subcellularLocation>
    <subcellularLocation>
        <location evidence="7 8">Midbody</location>
    </subcellularLocation>
    <subcellularLocation>
        <location evidence="1">Cytoplasm</location>
        <location evidence="1">Cytoskeleton</location>
        <location evidence="1">Cilium basal body</location>
    </subcellularLocation>
    <subcellularLocation>
        <location evidence="1">Cytoplasm</location>
        <location evidence="1">Cytoskeleton</location>
        <location evidence="1">Microtubule organizing center</location>
        <location evidence="1">Centrosome</location>
        <location evidence="1">Centriole</location>
    </subcellularLocation>
    <text evidence="8">Localizes to the midbody during telophase.</text>
</comment>
<comment type="alternative products">
    <event type="alternative splicing"/>
    <isoform>
        <id>Q9UBB4-1</id>
        <name>1</name>
        <sequence type="displayed"/>
    </isoform>
    <isoform>
        <id>Q9UBB4-2</id>
        <name>2</name>
        <sequence type="described" ref="VSP_042526"/>
    </isoform>
</comment>
<comment type="tissue specificity">
    <text evidence="4">Expressed in the central nervous system.</text>
</comment>
<comment type="PTM">
    <text evidence="7">Polyubiquitinated.</text>
</comment>
<comment type="PTM">
    <text evidence="7 8">Phosphorylation at Ser-12 by AURKB promotes the association of ATXN10 with PLK1 (PubMed:25666058). Phosphorylation at Ser-77 and Thr-82 by PLK1 may play a role in the regulation of cytokinesis and may stimulate the proteasome-mediated degradation of ATXN10 (PubMed:21857149).</text>
</comment>
<comment type="disease" evidence="3">
    <disease id="DI-01073">
        <name>Spinocerebellar ataxia 10</name>
        <acronym>SCA10</acronym>
        <description>Spinocerebellar ataxia is a clinically and genetically heterogeneous group of cerebellar disorders. Patients show progressive incoordination of gait and often poor coordination of hands, speech and eye movements, due to degeneration of the cerebellum with variable involvement of the brainstem and spinal cord. SCA10 is an autosomal dominant cerebellar ataxia (ADCA).</description>
        <dbReference type="MIM" id="603516"/>
    </disease>
    <text>The disease is caused by variants affecting the gene represented in this entry.</text>
</comment>
<comment type="disease">
    <text evidence="6">Defects in ATXN1 may be a cause of nephronophthisis a chronic tubulo-interstitial nephropathy that leads to anemia, polyuria, polydipsia, isosthenuria and death in uremia.</text>
</comment>
<comment type="similarity">
    <text evidence="10">Belongs to the ataxin-10 family.</text>
</comment>
<evidence type="ECO:0000250" key="1">
    <source>
        <dbReference type="UniProtKB" id="P28658"/>
    </source>
</evidence>
<evidence type="ECO:0000250" key="2">
    <source>
        <dbReference type="UniProtKB" id="Q9ER24"/>
    </source>
</evidence>
<evidence type="ECO:0000269" key="3">
    <source>
    </source>
</evidence>
<evidence type="ECO:0000269" key="4">
    <source>
    </source>
</evidence>
<evidence type="ECO:0000269" key="5">
    <source>
    </source>
</evidence>
<evidence type="ECO:0000269" key="6">
    <source>
    </source>
</evidence>
<evidence type="ECO:0000269" key="7">
    <source>
    </source>
</evidence>
<evidence type="ECO:0000269" key="8">
    <source>
    </source>
</evidence>
<evidence type="ECO:0000303" key="9">
    <source>
    </source>
</evidence>
<evidence type="ECO:0000305" key="10"/>
<evidence type="ECO:0007744" key="11">
    <source>
    </source>
</evidence>
<evidence type="ECO:0007744" key="12">
    <source>
    </source>
</evidence>
<feature type="chain" id="PRO_0000064748" description="Ataxin-10">
    <location>
        <begin position="1"/>
        <end position="475"/>
    </location>
</feature>
<feature type="modified residue" description="Omega-N-methylarginine" evidence="1">
    <location>
        <position position="10"/>
    </location>
</feature>
<feature type="modified residue" description="Phosphoserine; by AURKB" evidence="8 11">
    <location>
        <position position="12"/>
    </location>
</feature>
<feature type="modified residue" description="Phosphoserine; by PLK1" evidence="7">
    <location>
        <position position="77"/>
    </location>
</feature>
<feature type="modified residue" description="Phosphothreonine; by PLK1" evidence="7">
    <location>
        <position position="82"/>
    </location>
</feature>
<feature type="modified residue" description="Phosphoserine" evidence="12">
    <location>
        <position position="430"/>
    </location>
</feature>
<feature type="splice variant" id="VSP_042526" description="In isoform 2." evidence="9">
    <location>
        <begin position="40"/>
        <end position="103"/>
    </location>
</feature>
<accession>Q9UBB4</accession>
<accession>A6NLC4</accession>
<accession>B4DG05</accession>
<accession>O14998</accession>
<accession>O15009</accession>
<accession>Q6I9X4</accession>
<reference key="1">
    <citation type="journal article" date="2001" name="Genome Res.">
        <title>Towards a catalog of human genes and proteins: sequencing and analysis of 500 novel complete protein coding human cDNAs.</title>
        <authorList>
            <person name="Wiemann S."/>
            <person name="Weil B."/>
            <person name="Wellenreuther R."/>
            <person name="Gassenhuber J."/>
            <person name="Glassl S."/>
            <person name="Ansorge W."/>
            <person name="Boecher M."/>
            <person name="Bloecker H."/>
            <person name="Bauersachs S."/>
            <person name="Blum H."/>
            <person name="Lauber J."/>
            <person name="Duesterhoeft A."/>
            <person name="Beyer A."/>
            <person name="Koehrer K."/>
            <person name="Strack N."/>
            <person name="Mewes H.-W."/>
            <person name="Ottenwaelder B."/>
            <person name="Obermaier B."/>
            <person name="Tampe J."/>
            <person name="Heubner D."/>
            <person name="Wambutt R."/>
            <person name="Korn B."/>
            <person name="Klein M."/>
            <person name="Poustka A."/>
        </authorList>
    </citation>
    <scope>NUCLEOTIDE SEQUENCE [LARGE SCALE MRNA] (ISOFORM 1)</scope>
    <source>
        <tissue>Uterus</tissue>
    </source>
</reference>
<reference key="2">
    <citation type="journal article" date="2000" name="Proc. Natl. Acad. Sci. U.S.A.">
        <title>Gene expression profiling in the human hypothalamus-pituitary-adrenal axis and full-length cDNA cloning.</title>
        <authorList>
            <person name="Hu R.-M."/>
            <person name="Han Z.-G."/>
            <person name="Song H.-D."/>
            <person name="Peng Y.-D."/>
            <person name="Huang Q.-H."/>
            <person name="Ren S.-X."/>
            <person name="Gu Y.-J."/>
            <person name="Huang C.-H."/>
            <person name="Li Y.-B."/>
            <person name="Jiang C.-L."/>
            <person name="Fu G."/>
            <person name="Zhang Q.-H."/>
            <person name="Gu B.-W."/>
            <person name="Dai M."/>
            <person name="Mao Y.-F."/>
            <person name="Gao G.-F."/>
            <person name="Rong R."/>
            <person name="Ye M."/>
            <person name="Zhou J."/>
            <person name="Xu S.-H."/>
            <person name="Gu J."/>
            <person name="Shi J.-X."/>
            <person name="Jin W.-R."/>
            <person name="Zhang C.-K."/>
            <person name="Wu T.-M."/>
            <person name="Huang G.-Y."/>
            <person name="Chen Z."/>
            <person name="Chen M.-D."/>
            <person name="Chen J.-L."/>
        </authorList>
    </citation>
    <scope>NUCLEOTIDE SEQUENCE [MRNA] (ISOFORM 1)</scope>
    <source>
        <tissue>Adrenal gland</tissue>
        <tissue>Hypothalamus</tissue>
    </source>
</reference>
<reference key="3">
    <citation type="submission" date="2004-06" db="EMBL/GenBank/DDBJ databases">
        <title>Cloning of human full open reading frames in Gateway(TM) system entry vector (pDONR201).</title>
        <authorList>
            <person name="Ebert L."/>
            <person name="Schick M."/>
            <person name="Neubert P."/>
            <person name="Schatten R."/>
            <person name="Henze S."/>
            <person name="Korn B."/>
        </authorList>
    </citation>
    <scope>NUCLEOTIDE SEQUENCE [LARGE SCALE MRNA] (ISOFORM 1)</scope>
</reference>
<reference key="4">
    <citation type="journal article" date="2004" name="Genome Biol.">
        <title>A genome annotation-driven approach to cloning the human ORFeome.</title>
        <authorList>
            <person name="Collins J.E."/>
            <person name="Wright C.L."/>
            <person name="Edwards C.A."/>
            <person name="Davis M.P."/>
            <person name="Grinham J.A."/>
            <person name="Cole C.G."/>
            <person name="Goward M.E."/>
            <person name="Aguado B."/>
            <person name="Mallya M."/>
            <person name="Mokrab Y."/>
            <person name="Huckle E.J."/>
            <person name="Beare D.M."/>
            <person name="Dunham I."/>
        </authorList>
    </citation>
    <scope>NUCLEOTIDE SEQUENCE [LARGE SCALE MRNA] (ISOFORM 1)</scope>
</reference>
<reference key="5">
    <citation type="journal article" date="2004" name="Nat. Genet.">
        <title>Complete sequencing and characterization of 21,243 full-length human cDNAs.</title>
        <authorList>
            <person name="Ota T."/>
            <person name="Suzuki Y."/>
            <person name="Nishikawa T."/>
            <person name="Otsuki T."/>
            <person name="Sugiyama T."/>
            <person name="Irie R."/>
            <person name="Wakamatsu A."/>
            <person name="Hayashi K."/>
            <person name="Sato H."/>
            <person name="Nagai K."/>
            <person name="Kimura K."/>
            <person name="Makita H."/>
            <person name="Sekine M."/>
            <person name="Obayashi M."/>
            <person name="Nishi T."/>
            <person name="Shibahara T."/>
            <person name="Tanaka T."/>
            <person name="Ishii S."/>
            <person name="Yamamoto J."/>
            <person name="Saito K."/>
            <person name="Kawai Y."/>
            <person name="Isono Y."/>
            <person name="Nakamura Y."/>
            <person name="Nagahari K."/>
            <person name="Murakami K."/>
            <person name="Yasuda T."/>
            <person name="Iwayanagi T."/>
            <person name="Wagatsuma M."/>
            <person name="Shiratori A."/>
            <person name="Sudo H."/>
            <person name="Hosoiri T."/>
            <person name="Kaku Y."/>
            <person name="Kodaira H."/>
            <person name="Kondo H."/>
            <person name="Sugawara M."/>
            <person name="Takahashi M."/>
            <person name="Kanda K."/>
            <person name="Yokoi T."/>
            <person name="Furuya T."/>
            <person name="Kikkawa E."/>
            <person name="Omura Y."/>
            <person name="Abe K."/>
            <person name="Kamihara K."/>
            <person name="Katsuta N."/>
            <person name="Sato K."/>
            <person name="Tanikawa M."/>
            <person name="Yamazaki M."/>
            <person name="Ninomiya K."/>
            <person name="Ishibashi T."/>
            <person name="Yamashita H."/>
            <person name="Murakawa K."/>
            <person name="Fujimori K."/>
            <person name="Tanai H."/>
            <person name="Kimata M."/>
            <person name="Watanabe M."/>
            <person name="Hiraoka S."/>
            <person name="Chiba Y."/>
            <person name="Ishida S."/>
            <person name="Ono Y."/>
            <person name="Takiguchi S."/>
            <person name="Watanabe S."/>
            <person name="Yosida M."/>
            <person name="Hotuta T."/>
            <person name="Kusano J."/>
            <person name="Kanehori K."/>
            <person name="Takahashi-Fujii A."/>
            <person name="Hara H."/>
            <person name="Tanase T.-O."/>
            <person name="Nomura Y."/>
            <person name="Togiya S."/>
            <person name="Komai F."/>
            <person name="Hara R."/>
            <person name="Takeuchi K."/>
            <person name="Arita M."/>
            <person name="Imose N."/>
            <person name="Musashino K."/>
            <person name="Yuuki H."/>
            <person name="Oshima A."/>
            <person name="Sasaki N."/>
            <person name="Aotsuka S."/>
            <person name="Yoshikawa Y."/>
            <person name="Matsunawa H."/>
            <person name="Ichihara T."/>
            <person name="Shiohata N."/>
            <person name="Sano S."/>
            <person name="Moriya S."/>
            <person name="Momiyama H."/>
            <person name="Satoh N."/>
            <person name="Takami S."/>
            <person name="Terashima Y."/>
            <person name="Suzuki O."/>
            <person name="Nakagawa S."/>
            <person name="Senoh A."/>
            <person name="Mizoguchi H."/>
            <person name="Goto Y."/>
            <person name="Shimizu F."/>
            <person name="Wakebe H."/>
            <person name="Hishigaki H."/>
            <person name="Watanabe T."/>
            <person name="Sugiyama A."/>
            <person name="Takemoto M."/>
            <person name="Kawakami B."/>
            <person name="Yamazaki M."/>
            <person name="Watanabe K."/>
            <person name="Kumagai A."/>
            <person name="Itakura S."/>
            <person name="Fukuzumi Y."/>
            <person name="Fujimori Y."/>
            <person name="Komiyama M."/>
            <person name="Tashiro H."/>
            <person name="Tanigami A."/>
            <person name="Fujiwara T."/>
            <person name="Ono T."/>
            <person name="Yamada K."/>
            <person name="Fujii Y."/>
            <person name="Ozaki K."/>
            <person name="Hirao M."/>
            <person name="Ohmori Y."/>
            <person name="Kawabata A."/>
            <person name="Hikiji T."/>
            <person name="Kobatake N."/>
            <person name="Inagaki H."/>
            <person name="Ikema Y."/>
            <person name="Okamoto S."/>
            <person name="Okitani R."/>
            <person name="Kawakami T."/>
            <person name="Noguchi S."/>
            <person name="Itoh T."/>
            <person name="Shigeta K."/>
            <person name="Senba T."/>
            <person name="Matsumura K."/>
            <person name="Nakajima Y."/>
            <person name="Mizuno T."/>
            <person name="Morinaga M."/>
            <person name="Sasaki M."/>
            <person name="Togashi T."/>
            <person name="Oyama M."/>
            <person name="Hata H."/>
            <person name="Watanabe M."/>
            <person name="Komatsu T."/>
            <person name="Mizushima-Sugano J."/>
            <person name="Satoh T."/>
            <person name="Shirai Y."/>
            <person name="Takahashi Y."/>
            <person name="Nakagawa K."/>
            <person name="Okumura K."/>
            <person name="Nagase T."/>
            <person name="Nomura N."/>
            <person name="Kikuchi H."/>
            <person name="Masuho Y."/>
            <person name="Yamashita R."/>
            <person name="Nakai K."/>
            <person name="Yada T."/>
            <person name="Nakamura Y."/>
            <person name="Ohara O."/>
            <person name="Isogai T."/>
            <person name="Sugano S."/>
        </authorList>
    </citation>
    <scope>NUCLEOTIDE SEQUENCE [LARGE SCALE MRNA] (ISOFORM 2)</scope>
    <source>
        <tissue>Amygdala</tissue>
    </source>
</reference>
<reference key="6">
    <citation type="journal article" date="1999" name="Nature">
        <title>The DNA sequence of human chromosome 22.</title>
        <authorList>
            <person name="Dunham I."/>
            <person name="Hunt A.R."/>
            <person name="Collins J.E."/>
            <person name="Bruskiewich R."/>
            <person name="Beare D.M."/>
            <person name="Clamp M."/>
            <person name="Smink L.J."/>
            <person name="Ainscough R."/>
            <person name="Almeida J.P."/>
            <person name="Babbage A.K."/>
            <person name="Bagguley C."/>
            <person name="Bailey J."/>
            <person name="Barlow K.F."/>
            <person name="Bates K.N."/>
            <person name="Beasley O.P."/>
            <person name="Bird C.P."/>
            <person name="Blakey S.E."/>
            <person name="Bridgeman A.M."/>
            <person name="Buck D."/>
            <person name="Burgess J."/>
            <person name="Burrill W.D."/>
            <person name="Burton J."/>
            <person name="Carder C."/>
            <person name="Carter N.P."/>
            <person name="Chen Y."/>
            <person name="Clark G."/>
            <person name="Clegg S.M."/>
            <person name="Cobley V.E."/>
            <person name="Cole C.G."/>
            <person name="Collier R.E."/>
            <person name="Connor R."/>
            <person name="Conroy D."/>
            <person name="Corby N.R."/>
            <person name="Coville G.J."/>
            <person name="Cox A.V."/>
            <person name="Davis J."/>
            <person name="Dawson E."/>
            <person name="Dhami P.D."/>
            <person name="Dockree C."/>
            <person name="Dodsworth S.J."/>
            <person name="Durbin R.M."/>
            <person name="Ellington A.G."/>
            <person name="Evans K.L."/>
            <person name="Fey J.M."/>
            <person name="Fleming K."/>
            <person name="French L."/>
            <person name="Garner A.A."/>
            <person name="Gilbert J.G.R."/>
            <person name="Goward M.E."/>
            <person name="Grafham D.V."/>
            <person name="Griffiths M.N.D."/>
            <person name="Hall C."/>
            <person name="Hall R.E."/>
            <person name="Hall-Tamlyn G."/>
            <person name="Heathcott R.W."/>
            <person name="Ho S."/>
            <person name="Holmes S."/>
            <person name="Hunt S.E."/>
            <person name="Jones M.C."/>
            <person name="Kershaw J."/>
            <person name="Kimberley A.M."/>
            <person name="King A."/>
            <person name="Laird G.K."/>
            <person name="Langford C.F."/>
            <person name="Leversha M.A."/>
            <person name="Lloyd C."/>
            <person name="Lloyd D.M."/>
            <person name="Martyn I.D."/>
            <person name="Mashreghi-Mohammadi M."/>
            <person name="Matthews L.H."/>
            <person name="Mccann O.T."/>
            <person name="Mcclay J."/>
            <person name="Mclaren S."/>
            <person name="McMurray A.A."/>
            <person name="Milne S.A."/>
            <person name="Mortimore B.J."/>
            <person name="Odell C.N."/>
            <person name="Pavitt R."/>
            <person name="Pearce A.V."/>
            <person name="Pearson D."/>
            <person name="Phillimore B.J.C.T."/>
            <person name="Phillips S.H."/>
            <person name="Plumb R.W."/>
            <person name="Ramsay H."/>
            <person name="Ramsey Y."/>
            <person name="Rogers L."/>
            <person name="Ross M.T."/>
            <person name="Scott C.E."/>
            <person name="Sehra H.K."/>
            <person name="Skuce C.D."/>
            <person name="Smalley S."/>
            <person name="Smith M.L."/>
            <person name="Soderlund C."/>
            <person name="Spragon L."/>
            <person name="Steward C.A."/>
            <person name="Sulston J.E."/>
            <person name="Swann R.M."/>
            <person name="Vaudin M."/>
            <person name="Wall M."/>
            <person name="Wallis J.M."/>
            <person name="Whiteley M.N."/>
            <person name="Willey D.L."/>
            <person name="Williams L."/>
            <person name="Williams S.A."/>
            <person name="Williamson H."/>
            <person name="Wilmer T.E."/>
            <person name="Wilming L."/>
            <person name="Wright C.L."/>
            <person name="Hubbard T."/>
            <person name="Bentley D.R."/>
            <person name="Beck S."/>
            <person name="Rogers J."/>
            <person name="Shimizu N."/>
            <person name="Minoshima S."/>
            <person name="Kawasaki K."/>
            <person name="Sasaki T."/>
            <person name="Asakawa S."/>
            <person name="Kudoh J."/>
            <person name="Shintani A."/>
            <person name="Shibuya K."/>
            <person name="Yoshizaki Y."/>
            <person name="Aoki N."/>
            <person name="Mitsuyama S."/>
            <person name="Roe B.A."/>
            <person name="Chen F."/>
            <person name="Chu L."/>
            <person name="Crabtree J."/>
            <person name="Deschamps S."/>
            <person name="Do A."/>
            <person name="Do T."/>
            <person name="Dorman A."/>
            <person name="Fang F."/>
            <person name="Fu Y."/>
            <person name="Hu P."/>
            <person name="Hua A."/>
            <person name="Kenton S."/>
            <person name="Lai H."/>
            <person name="Lao H.I."/>
            <person name="Lewis J."/>
            <person name="Lewis S."/>
            <person name="Lin S.-P."/>
            <person name="Loh P."/>
            <person name="Malaj E."/>
            <person name="Nguyen T."/>
            <person name="Pan H."/>
            <person name="Phan S."/>
            <person name="Qi S."/>
            <person name="Qian Y."/>
            <person name="Ray L."/>
            <person name="Ren Q."/>
            <person name="Shaull S."/>
            <person name="Sloan D."/>
            <person name="Song L."/>
            <person name="Wang Q."/>
            <person name="Wang Y."/>
            <person name="Wang Z."/>
            <person name="White J."/>
            <person name="Willingham D."/>
            <person name="Wu H."/>
            <person name="Yao Z."/>
            <person name="Zhan M."/>
            <person name="Zhang G."/>
            <person name="Chissoe S."/>
            <person name="Murray J."/>
            <person name="Miller N."/>
            <person name="Minx P."/>
            <person name="Fulton R."/>
            <person name="Johnson D."/>
            <person name="Bemis G."/>
            <person name="Bentley D."/>
            <person name="Bradshaw H."/>
            <person name="Bourne S."/>
            <person name="Cordes M."/>
            <person name="Du Z."/>
            <person name="Fulton L."/>
            <person name="Goela D."/>
            <person name="Graves T."/>
            <person name="Hawkins J."/>
            <person name="Hinds K."/>
            <person name="Kemp K."/>
            <person name="Latreille P."/>
            <person name="Layman D."/>
            <person name="Ozersky P."/>
            <person name="Rohlfing T."/>
            <person name="Scheet P."/>
            <person name="Walker C."/>
            <person name="Wamsley A."/>
            <person name="Wohldmann P."/>
            <person name="Pepin K."/>
            <person name="Nelson J."/>
            <person name="Korf I."/>
            <person name="Bedell J.A."/>
            <person name="Hillier L.W."/>
            <person name="Mardis E."/>
            <person name="Waterston R."/>
            <person name="Wilson R."/>
            <person name="Emanuel B.S."/>
            <person name="Shaikh T."/>
            <person name="Kurahashi H."/>
            <person name="Saitta S."/>
            <person name="Budarf M.L."/>
            <person name="McDermid H.E."/>
            <person name="Johnson A."/>
            <person name="Wong A.C.C."/>
            <person name="Morrow B.E."/>
            <person name="Edelmann L."/>
            <person name="Kim U.J."/>
            <person name="Shizuya H."/>
            <person name="Simon M.I."/>
            <person name="Dumanski J.P."/>
            <person name="Peyrard M."/>
            <person name="Kedra D."/>
            <person name="Seroussi E."/>
            <person name="Fransson I."/>
            <person name="Tapia I."/>
            <person name="Bruder C.E."/>
            <person name="O'Brien K.P."/>
            <person name="Wilkinson P."/>
            <person name="Bodenteich A."/>
            <person name="Hartman K."/>
            <person name="Hu X."/>
            <person name="Khan A.S."/>
            <person name="Lane L."/>
            <person name="Tilahun Y."/>
            <person name="Wright H."/>
        </authorList>
    </citation>
    <scope>NUCLEOTIDE SEQUENCE [LARGE SCALE GENOMIC DNA]</scope>
</reference>
<reference key="7">
    <citation type="journal article" date="2004" name="Genome Res.">
        <title>The status, quality, and expansion of the NIH full-length cDNA project: the Mammalian Gene Collection (MGC).</title>
        <authorList>
            <consortium name="The MGC Project Team"/>
        </authorList>
    </citation>
    <scope>NUCLEOTIDE SEQUENCE [LARGE SCALE MRNA] (ISOFORM 1)</scope>
    <source>
        <tissue>Ovary</tissue>
    </source>
</reference>
<reference key="8">
    <citation type="journal article" date="2004" name="J. Biol. Chem.">
        <title>Ataxin-10, the spinocerebellar ataxia type 10 neurodegenerative disorder protein, is essential for survival of cerebellar neurons.</title>
        <authorList>
            <person name="Maerz P."/>
            <person name="Probst A."/>
            <person name="Lang S."/>
            <person name="Schwager M."/>
            <person name="Rose-John S."/>
            <person name="Otten U."/>
            <person name="Ozbek S."/>
        </authorList>
    </citation>
    <scope>TISSUE SPECIFICITY</scope>
</reference>
<reference key="9">
    <citation type="journal article" date="2006" name="J. Neurosci. Res.">
        <title>Ataxin 10 induces neuritogenesis via interaction with G-protein beta2 subunit.</title>
        <authorList>
            <person name="Waragai M."/>
            <person name="Nagamitsu S."/>
            <person name="Xu W."/>
            <person name="Li Y.J."/>
            <person name="Lin X."/>
            <person name="Ashizawa T."/>
        </authorList>
    </citation>
    <scope>SUBCELLULAR LOCATION</scope>
    <scope>INTERACTION WITH GNB2</scope>
</reference>
<reference key="10">
    <citation type="journal article" date="2000" name="Nat. Genet.">
        <title>Large expansion of the ATTCT pentanucleotide repeat in spinocerebellar ataxia type 10.</title>
        <authorList>
            <person name="Matsuura T."/>
            <person name="Yamagata T."/>
            <person name="Burgess D.L."/>
            <person name="Rasmussen A."/>
            <person name="Grewal R.P."/>
            <person name="Watase K."/>
            <person name="Khajavi M."/>
            <person name="McCall A.E."/>
            <person name="Davis C.F."/>
            <person name="Zu L."/>
            <person name="Achari M."/>
            <person name="Pulst S.M."/>
            <person name="Alonso E."/>
            <person name="Noebels J.L."/>
            <person name="Nelson D.L."/>
            <person name="Zoghbi H.Y."/>
            <person name="Ashizawa T."/>
        </authorList>
    </citation>
    <scope>INVOLVEMENT IN SCA10</scope>
</reference>
<reference key="11">
    <citation type="journal article" date="2010" name="Sci. Signal.">
        <title>Quantitative phosphoproteomics reveals widespread full phosphorylation site occupancy during mitosis.</title>
        <authorList>
            <person name="Olsen J.V."/>
            <person name="Vermeulen M."/>
            <person name="Santamaria A."/>
            <person name="Kumar C."/>
            <person name="Miller M.L."/>
            <person name="Jensen L.J."/>
            <person name="Gnad F."/>
            <person name="Cox J."/>
            <person name="Jensen T.S."/>
            <person name="Nigg E.A."/>
            <person name="Brunak S."/>
            <person name="Mann M."/>
        </authorList>
    </citation>
    <scope>PHOSPHORYLATION [LARGE SCALE ANALYSIS] AT SER-12</scope>
    <scope>IDENTIFICATION BY MASS SPECTROMETRY [LARGE SCALE ANALYSIS]</scope>
    <source>
        <tissue>Cervix carcinoma</tissue>
    </source>
</reference>
<reference key="12">
    <citation type="journal article" date="2011" name="BMC Syst. Biol.">
        <title>Initial characterization of the human central proteome.</title>
        <authorList>
            <person name="Burkard T.R."/>
            <person name="Planyavsky M."/>
            <person name="Kaupe I."/>
            <person name="Breitwieser F.P."/>
            <person name="Buerckstuemmer T."/>
            <person name="Bennett K.L."/>
            <person name="Superti-Furga G."/>
            <person name="Colinge J."/>
        </authorList>
    </citation>
    <scope>IDENTIFICATION BY MASS SPECTROMETRY [LARGE SCALE ANALYSIS]</scope>
</reference>
<reference key="13">
    <citation type="journal article" date="2011" name="Cell">
        <title>Mapping the NPHP-JBTS-MKS protein network reveals ciliopathy disease genes and pathways.</title>
        <authorList>
            <person name="Sang L."/>
            <person name="Miller J.J."/>
            <person name="Corbit K.C."/>
            <person name="Giles R.H."/>
            <person name="Brauer M.J."/>
            <person name="Otto E.A."/>
            <person name="Baye L.M."/>
            <person name="Wen X."/>
            <person name="Scales S.J."/>
            <person name="Kwong M."/>
            <person name="Huntzicker E.G."/>
            <person name="Sfakianos M.K."/>
            <person name="Sandoval W."/>
            <person name="Bazan J.F."/>
            <person name="Kulkarni P."/>
            <person name="Garcia-Gonzalo F.R."/>
            <person name="Seol A.D."/>
            <person name="O'Toole J.F."/>
            <person name="Held S."/>
            <person name="Reutter H.M."/>
            <person name="Lane W.S."/>
            <person name="Rafiq M.A."/>
            <person name="Noor A."/>
            <person name="Ansar M."/>
            <person name="Devi A.R."/>
            <person name="Sheffield V.C."/>
            <person name="Slusarski D.C."/>
            <person name="Vincent J.B."/>
            <person name="Doherty D.A."/>
            <person name="Hildebrandt F."/>
            <person name="Reiter J.F."/>
            <person name="Jackson P.K."/>
        </authorList>
    </citation>
    <scope>INTERACTION WITH IQCB1</scope>
    <scope>INVOLVEMENT IN NEPHRONOPHTHISIS</scope>
</reference>
<reference key="14">
    <citation type="journal article" date="2011" name="Cell Cycle">
        <title>Phosphorylation of Ataxin-10 by polo-like kinase 1 is required for cytokinesis.</title>
        <authorList>
            <person name="Li J."/>
            <person name="Wang J."/>
            <person name="Hou W."/>
            <person name="Jing Z."/>
            <person name="Tian C."/>
            <person name="Han Y."/>
            <person name="Liao J."/>
            <person name="Dong M.Q."/>
            <person name="Xu X."/>
        </authorList>
    </citation>
    <scope>FUNCTION</scope>
    <scope>SUBCELLULAR LOCATION</scope>
    <scope>POLYUBIQUITINATION</scope>
    <scope>PHOSPHORYLATION AT SER-77 AND THR-82</scope>
</reference>
<reference key="15">
    <citation type="journal article" date="2013" name="J. Proteome Res.">
        <title>Toward a comprehensive characterization of a human cancer cell phosphoproteome.</title>
        <authorList>
            <person name="Zhou H."/>
            <person name="Di Palma S."/>
            <person name="Preisinger C."/>
            <person name="Peng M."/>
            <person name="Polat A.N."/>
            <person name="Heck A.J."/>
            <person name="Mohammed S."/>
        </authorList>
    </citation>
    <scope>PHOSPHORYLATION [LARGE SCALE ANALYSIS] AT SER-430</scope>
    <scope>IDENTIFICATION BY MASS SPECTROMETRY [LARGE SCALE ANALYSIS]</scope>
    <source>
        <tissue>Cervix carcinoma</tissue>
        <tissue>Erythroleukemia</tissue>
    </source>
</reference>
<reference key="16">
    <citation type="journal article" date="2014" name="J. Proteomics">
        <title>An enzyme assisted RP-RPLC approach for in-depth analysis of human liver phosphoproteome.</title>
        <authorList>
            <person name="Bian Y."/>
            <person name="Song C."/>
            <person name="Cheng K."/>
            <person name="Dong M."/>
            <person name="Wang F."/>
            <person name="Huang J."/>
            <person name="Sun D."/>
            <person name="Wang L."/>
            <person name="Ye M."/>
            <person name="Zou H."/>
        </authorList>
    </citation>
    <scope>IDENTIFICATION BY MASS SPECTROMETRY [LARGE SCALE ANALYSIS]</scope>
    <source>
        <tissue>Liver</tissue>
    </source>
</reference>
<reference key="17">
    <citation type="journal article" date="2015" name="Sci. Rep.">
        <title>Aurora B-dependent phosphorylation of Ataxin-10 promotes the interaction between Ataxin-10 and Plk1 in cytokinesis.</title>
        <authorList>
            <person name="Tian J."/>
            <person name="Tian C."/>
            <person name="Ding Y."/>
            <person name="Li Z."/>
            <person name="Geng Q."/>
            <person name="Xiahou Z."/>
            <person name="Wang J."/>
            <person name="Hou W."/>
            <person name="Liao J."/>
            <person name="Dong M.Q."/>
            <person name="Xu X."/>
            <person name="Li J."/>
        </authorList>
    </citation>
    <scope>FUNCTION</scope>
    <scope>SUBCELLULAR LOCATION</scope>
    <scope>PHOSPHORYLATION AT SER-12</scope>
</reference>